<comment type="tissue specificity">
    <text evidence="3">Expressed in flowers.</text>
</comment>
<comment type="similarity">
    <text evidence="4">Belongs to the MEG family.</text>
</comment>
<gene>
    <name type="primary">ESFL8</name>
    <name type="ordered locus">At2g16535</name>
    <name type="ORF">F1P15</name>
</gene>
<accession>A8MR88</accession>
<protein>
    <recommendedName>
        <fullName>EMBRYO SURROUNDING FACTOR 1-like protein 8</fullName>
    </recommendedName>
</protein>
<feature type="signal peptide" evidence="2">
    <location>
        <begin position="1"/>
        <end position="22"/>
    </location>
</feature>
<feature type="chain" id="PRO_0000430069" description="EMBRYO SURROUNDING FACTOR 1-like protein 8">
    <location>
        <begin position="23"/>
        <end position="76"/>
    </location>
</feature>
<feature type="disulfide bond" evidence="1">
    <location>
        <begin position="38"/>
        <end position="54"/>
    </location>
</feature>
<feature type="disulfide bond" evidence="1">
    <location>
        <begin position="43"/>
        <end position="74"/>
    </location>
</feature>
<feature type="disulfide bond" evidence="1">
    <location>
        <begin position="52"/>
        <end position="70"/>
    </location>
</feature>
<feature type="disulfide bond" evidence="1">
    <location>
        <begin position="55"/>
        <end position="63"/>
    </location>
</feature>
<name>ESFL8_ARATH</name>
<evidence type="ECO:0000250" key="1"/>
<evidence type="ECO:0000255" key="2"/>
<evidence type="ECO:0000269" key="3">
    <source>
    </source>
</evidence>
<evidence type="ECO:0000305" key="4"/>
<dbReference type="EMBL" id="AC007195">
    <property type="status" value="NOT_ANNOTATED_CDS"/>
    <property type="molecule type" value="Genomic_DNA"/>
</dbReference>
<dbReference type="EMBL" id="CP002685">
    <property type="protein sequence ID" value="AEC06509.1"/>
    <property type="molecule type" value="Genomic_DNA"/>
</dbReference>
<dbReference type="RefSeq" id="NP_001077898.1">
    <property type="nucleotide sequence ID" value="NM_001084429.2"/>
</dbReference>
<dbReference type="STRING" id="3702.A8MR88"/>
<dbReference type="PaxDb" id="3702-AT2G16535.1"/>
<dbReference type="ProteomicsDB" id="220646"/>
<dbReference type="EnsemblPlants" id="AT2G16535.1">
    <property type="protein sequence ID" value="AT2G16535.1"/>
    <property type="gene ID" value="AT2G16535"/>
</dbReference>
<dbReference type="GeneID" id="5007880"/>
<dbReference type="Gramene" id="AT2G16535.1">
    <property type="protein sequence ID" value="AT2G16535.1"/>
    <property type="gene ID" value="AT2G16535"/>
</dbReference>
<dbReference type="KEGG" id="ath:AT2G16535"/>
<dbReference type="Araport" id="AT2G16535"/>
<dbReference type="TAIR" id="AT2G16535">
    <property type="gene designation" value="PCP-BGAMMA"/>
</dbReference>
<dbReference type="HOGENOM" id="CLU_183999_0_0_1"/>
<dbReference type="InParanoid" id="A8MR88"/>
<dbReference type="OMA" id="NCDNKDR"/>
<dbReference type="OrthoDB" id="1095638at2759"/>
<dbReference type="PhylomeDB" id="A8MR88"/>
<dbReference type="PRO" id="PR:A8MR88"/>
<dbReference type="Proteomes" id="UP000006548">
    <property type="component" value="Chromosome 2"/>
</dbReference>
<dbReference type="ExpressionAtlas" id="A8MR88">
    <property type="expression patterns" value="baseline"/>
</dbReference>
<dbReference type="GO" id="GO:0140301">
    <property type="term" value="P:pollen-stigma interaction"/>
    <property type="evidence" value="ECO:0000316"/>
    <property type="project" value="TAIR"/>
</dbReference>
<reference key="1">
    <citation type="journal article" date="1999" name="Nature">
        <title>Sequence and analysis of chromosome 2 of the plant Arabidopsis thaliana.</title>
        <authorList>
            <person name="Lin X."/>
            <person name="Kaul S."/>
            <person name="Rounsley S.D."/>
            <person name="Shea T.P."/>
            <person name="Benito M.-I."/>
            <person name="Town C.D."/>
            <person name="Fujii C.Y."/>
            <person name="Mason T.M."/>
            <person name="Bowman C.L."/>
            <person name="Barnstead M.E."/>
            <person name="Feldblyum T.V."/>
            <person name="Buell C.R."/>
            <person name="Ketchum K.A."/>
            <person name="Lee J.J."/>
            <person name="Ronning C.M."/>
            <person name="Koo H.L."/>
            <person name="Moffat K.S."/>
            <person name="Cronin L.A."/>
            <person name="Shen M."/>
            <person name="Pai G."/>
            <person name="Van Aken S."/>
            <person name="Umayam L."/>
            <person name="Tallon L.J."/>
            <person name="Gill J.E."/>
            <person name="Adams M.D."/>
            <person name="Carrera A.J."/>
            <person name="Creasy T.H."/>
            <person name="Goodman H.M."/>
            <person name="Somerville C.R."/>
            <person name="Copenhaver G.P."/>
            <person name="Preuss D."/>
            <person name="Nierman W.C."/>
            <person name="White O."/>
            <person name="Eisen J.A."/>
            <person name="Salzberg S.L."/>
            <person name="Fraser C.M."/>
            <person name="Venter J.C."/>
        </authorList>
    </citation>
    <scope>NUCLEOTIDE SEQUENCE [LARGE SCALE GENOMIC DNA]</scope>
    <source>
        <strain>cv. Columbia</strain>
    </source>
</reference>
<reference key="2">
    <citation type="journal article" date="2017" name="Plant J.">
        <title>Araport11: a complete reannotation of the Arabidopsis thaliana reference genome.</title>
        <authorList>
            <person name="Cheng C.Y."/>
            <person name="Krishnakumar V."/>
            <person name="Chan A.P."/>
            <person name="Thibaud-Nissen F."/>
            <person name="Schobel S."/>
            <person name="Town C.D."/>
        </authorList>
    </citation>
    <scope>GENOME REANNOTATION</scope>
    <source>
        <strain>cv. Columbia</strain>
    </source>
</reference>
<reference key="3">
    <citation type="journal article" date="2014" name="Science">
        <title>Central cell-derived peptides regulate early embryo patterning in flowering plants.</title>
        <authorList>
            <person name="Costa L.M."/>
            <person name="Marshall E."/>
            <person name="Tesfaye M."/>
            <person name="Silverstein K.A."/>
            <person name="Mori M."/>
            <person name="Umetsu Y."/>
            <person name="Otterbach S.L."/>
            <person name="Papareddy R."/>
            <person name="Dickinson H.G."/>
            <person name="Boutiller K."/>
            <person name="VandenBosch K.A."/>
            <person name="Ohki S."/>
            <person name="Gutierrez-Marcos J.F."/>
        </authorList>
    </citation>
    <scope>IDENTIFICATION</scope>
    <scope>TISSUE SPECIFICITY</scope>
</reference>
<organism>
    <name type="scientific">Arabidopsis thaliana</name>
    <name type="common">Mouse-ear cress</name>
    <dbReference type="NCBI Taxonomy" id="3702"/>
    <lineage>
        <taxon>Eukaryota</taxon>
        <taxon>Viridiplantae</taxon>
        <taxon>Streptophyta</taxon>
        <taxon>Embryophyta</taxon>
        <taxon>Tracheophyta</taxon>
        <taxon>Spermatophyta</taxon>
        <taxon>Magnoliopsida</taxon>
        <taxon>eudicotyledons</taxon>
        <taxon>Gunneridae</taxon>
        <taxon>Pentapetalae</taxon>
        <taxon>rosids</taxon>
        <taxon>malvids</taxon>
        <taxon>Brassicales</taxon>
        <taxon>Brassicaceae</taxon>
        <taxon>Camelineae</taxon>
        <taxon>Arabidopsis</taxon>
    </lineage>
</organism>
<keyword id="KW-1015">Disulfide bond</keyword>
<keyword id="KW-1185">Reference proteome</keyword>
<keyword id="KW-0732">Signal</keyword>
<proteinExistence type="evidence at transcript level"/>
<sequence>MSSSQFFILCIILISSFPLHECENGKSVEASNAAKTLCMSVNCDNKDRNLTCACCLAKSKNRCYSSKSECVADCKD</sequence>